<name>CSRA_SYNWW</name>
<proteinExistence type="inferred from homology"/>
<protein>
    <recommendedName>
        <fullName evidence="1">Translational regulator CsrA</fullName>
    </recommendedName>
</protein>
<sequence length="76" mass="8689">MLILGRRKGESILIGDDIEITIVDIQGDYIRMGIQAPREVSIVRKEIKEQIREENIKAAEKPEGLPALLEEMKKFI</sequence>
<feature type="chain" id="PRO_1000023432" description="Translational regulator CsrA">
    <location>
        <begin position="1"/>
        <end position="76"/>
    </location>
</feature>
<comment type="function">
    <text evidence="1">A translational regulator that binds mRNA to regulate translation initiation and/or mRNA stability. Usually binds in the 5'-UTR at or near the Shine-Dalgarno sequence preventing ribosome-binding, thus repressing translation. Its main target seems to be the major flagellin gene, while its function is anatagonized by FliW.</text>
</comment>
<comment type="subunit">
    <text evidence="1">Homodimer; the beta-strands of each monomer intercalate to form a hydrophobic core, while the alpha-helices form wings that extend away from the core.</text>
</comment>
<comment type="subcellular location">
    <subcellularLocation>
        <location evidence="1">Cytoplasm</location>
    </subcellularLocation>
</comment>
<comment type="similarity">
    <text evidence="1">Belongs to the CsrA/RsmA family.</text>
</comment>
<reference key="1">
    <citation type="journal article" date="2010" name="Environ. Microbiol.">
        <title>The genome of Syntrophomonas wolfei: new insights into syntrophic metabolism and biohydrogen production.</title>
        <authorList>
            <person name="Sieber J.R."/>
            <person name="Sims D.R."/>
            <person name="Han C."/>
            <person name="Kim E."/>
            <person name="Lykidis A."/>
            <person name="Lapidus A.L."/>
            <person name="McDonnald E."/>
            <person name="Rohlin L."/>
            <person name="Culley D.E."/>
            <person name="Gunsalus R."/>
            <person name="McInerney M.J."/>
        </authorList>
    </citation>
    <scope>NUCLEOTIDE SEQUENCE [LARGE SCALE GENOMIC DNA]</scope>
    <source>
        <strain>DSM 2245B / Goettingen</strain>
    </source>
</reference>
<dbReference type="EMBL" id="CP000448">
    <property type="protein sequence ID" value="ABI67548.1"/>
    <property type="molecule type" value="Genomic_DNA"/>
</dbReference>
<dbReference type="RefSeq" id="WP_011639657.1">
    <property type="nucleotide sequence ID" value="NC_008346.1"/>
</dbReference>
<dbReference type="SMR" id="Q0B0F6"/>
<dbReference type="STRING" id="335541.Swol_0196"/>
<dbReference type="KEGG" id="swo:Swol_0196"/>
<dbReference type="eggNOG" id="COG1551">
    <property type="taxonomic scope" value="Bacteria"/>
</dbReference>
<dbReference type="HOGENOM" id="CLU_164837_0_0_9"/>
<dbReference type="OrthoDB" id="9809061at2"/>
<dbReference type="Proteomes" id="UP000001968">
    <property type="component" value="Chromosome"/>
</dbReference>
<dbReference type="GO" id="GO:0005829">
    <property type="term" value="C:cytosol"/>
    <property type="evidence" value="ECO:0007669"/>
    <property type="project" value="TreeGrafter"/>
</dbReference>
<dbReference type="GO" id="GO:0048027">
    <property type="term" value="F:mRNA 5'-UTR binding"/>
    <property type="evidence" value="ECO:0007669"/>
    <property type="project" value="UniProtKB-UniRule"/>
</dbReference>
<dbReference type="GO" id="GO:0044781">
    <property type="term" value="P:bacterial-type flagellum organization"/>
    <property type="evidence" value="ECO:0007669"/>
    <property type="project" value="UniProtKB-KW"/>
</dbReference>
<dbReference type="GO" id="GO:0006402">
    <property type="term" value="P:mRNA catabolic process"/>
    <property type="evidence" value="ECO:0007669"/>
    <property type="project" value="InterPro"/>
</dbReference>
<dbReference type="GO" id="GO:0045947">
    <property type="term" value="P:negative regulation of translational initiation"/>
    <property type="evidence" value="ECO:0007669"/>
    <property type="project" value="UniProtKB-UniRule"/>
</dbReference>
<dbReference type="GO" id="GO:1902208">
    <property type="term" value="P:regulation of bacterial-type flagellum assembly"/>
    <property type="evidence" value="ECO:0007669"/>
    <property type="project" value="UniProtKB-UniRule"/>
</dbReference>
<dbReference type="GO" id="GO:0006109">
    <property type="term" value="P:regulation of carbohydrate metabolic process"/>
    <property type="evidence" value="ECO:0007669"/>
    <property type="project" value="InterPro"/>
</dbReference>
<dbReference type="FunFam" id="2.60.40.4380:FF:000002">
    <property type="entry name" value="Translational regulator CsrA"/>
    <property type="match status" value="1"/>
</dbReference>
<dbReference type="Gene3D" id="2.60.40.4380">
    <property type="entry name" value="Translational regulator CsrA"/>
    <property type="match status" value="1"/>
</dbReference>
<dbReference type="HAMAP" id="MF_00167">
    <property type="entry name" value="CsrA"/>
    <property type="match status" value="1"/>
</dbReference>
<dbReference type="InterPro" id="IPR003751">
    <property type="entry name" value="CsrA"/>
</dbReference>
<dbReference type="InterPro" id="IPR036107">
    <property type="entry name" value="CsrA_sf"/>
</dbReference>
<dbReference type="NCBIfam" id="TIGR00202">
    <property type="entry name" value="csrA"/>
    <property type="match status" value="1"/>
</dbReference>
<dbReference type="NCBIfam" id="NF002469">
    <property type="entry name" value="PRK01712.1"/>
    <property type="match status" value="1"/>
</dbReference>
<dbReference type="PANTHER" id="PTHR34984">
    <property type="entry name" value="CARBON STORAGE REGULATOR"/>
    <property type="match status" value="1"/>
</dbReference>
<dbReference type="PANTHER" id="PTHR34984:SF1">
    <property type="entry name" value="CARBON STORAGE REGULATOR"/>
    <property type="match status" value="1"/>
</dbReference>
<dbReference type="Pfam" id="PF02599">
    <property type="entry name" value="CsrA"/>
    <property type="match status" value="1"/>
</dbReference>
<dbReference type="SUPFAM" id="SSF117130">
    <property type="entry name" value="CsrA-like"/>
    <property type="match status" value="1"/>
</dbReference>
<keyword id="KW-1005">Bacterial flagellum biogenesis</keyword>
<keyword id="KW-0963">Cytoplasm</keyword>
<keyword id="KW-1185">Reference proteome</keyword>
<keyword id="KW-0678">Repressor</keyword>
<keyword id="KW-0694">RNA-binding</keyword>
<keyword id="KW-0810">Translation regulation</keyword>
<evidence type="ECO:0000255" key="1">
    <source>
        <dbReference type="HAMAP-Rule" id="MF_00167"/>
    </source>
</evidence>
<gene>
    <name evidence="1" type="primary">csrA</name>
    <name type="ordered locus">Swol_0196</name>
</gene>
<accession>Q0B0F6</accession>
<organism>
    <name type="scientific">Syntrophomonas wolfei subsp. wolfei (strain DSM 2245B / Goettingen)</name>
    <dbReference type="NCBI Taxonomy" id="335541"/>
    <lineage>
        <taxon>Bacteria</taxon>
        <taxon>Bacillati</taxon>
        <taxon>Bacillota</taxon>
        <taxon>Clostridia</taxon>
        <taxon>Eubacteriales</taxon>
        <taxon>Syntrophomonadaceae</taxon>
        <taxon>Syntrophomonas</taxon>
    </lineage>
</organism>